<dbReference type="EMBL" id="CP001132">
    <property type="protein sequence ID" value="ACH82782.1"/>
    <property type="molecule type" value="Genomic_DNA"/>
</dbReference>
<dbReference type="SMR" id="B5EMA3"/>
<dbReference type="KEGG" id="afe:Lferr_0528"/>
<dbReference type="eggNOG" id="COG2003">
    <property type="taxonomic scope" value="Bacteria"/>
</dbReference>
<dbReference type="HOGENOM" id="CLU_073529_0_1_6"/>
<dbReference type="GO" id="GO:0046872">
    <property type="term" value="F:metal ion binding"/>
    <property type="evidence" value="ECO:0007669"/>
    <property type="project" value="UniProtKB-KW"/>
</dbReference>
<dbReference type="GO" id="GO:0008237">
    <property type="term" value="F:metallopeptidase activity"/>
    <property type="evidence" value="ECO:0007669"/>
    <property type="project" value="UniProtKB-KW"/>
</dbReference>
<dbReference type="GO" id="GO:0006508">
    <property type="term" value="P:proteolysis"/>
    <property type="evidence" value="ECO:0007669"/>
    <property type="project" value="UniProtKB-KW"/>
</dbReference>
<dbReference type="CDD" id="cd08071">
    <property type="entry name" value="MPN_DUF2466"/>
    <property type="match status" value="1"/>
</dbReference>
<dbReference type="Gene3D" id="3.40.140.10">
    <property type="entry name" value="Cytidine Deaminase, domain 2"/>
    <property type="match status" value="1"/>
</dbReference>
<dbReference type="InterPro" id="IPR037518">
    <property type="entry name" value="MPN"/>
</dbReference>
<dbReference type="InterPro" id="IPR025657">
    <property type="entry name" value="RadC_JAB"/>
</dbReference>
<dbReference type="InterPro" id="IPR010994">
    <property type="entry name" value="RuvA_2-like"/>
</dbReference>
<dbReference type="InterPro" id="IPR001405">
    <property type="entry name" value="UPF0758"/>
</dbReference>
<dbReference type="InterPro" id="IPR020891">
    <property type="entry name" value="UPF0758_CS"/>
</dbReference>
<dbReference type="InterPro" id="IPR046778">
    <property type="entry name" value="UPF0758_N"/>
</dbReference>
<dbReference type="NCBIfam" id="NF000642">
    <property type="entry name" value="PRK00024.1"/>
    <property type="match status" value="1"/>
</dbReference>
<dbReference type="NCBIfam" id="TIGR00608">
    <property type="entry name" value="radc"/>
    <property type="match status" value="1"/>
</dbReference>
<dbReference type="PANTHER" id="PTHR30471">
    <property type="entry name" value="DNA REPAIR PROTEIN RADC"/>
    <property type="match status" value="1"/>
</dbReference>
<dbReference type="PANTHER" id="PTHR30471:SF3">
    <property type="entry name" value="UPF0758 PROTEIN YEES-RELATED"/>
    <property type="match status" value="1"/>
</dbReference>
<dbReference type="Pfam" id="PF04002">
    <property type="entry name" value="RadC"/>
    <property type="match status" value="1"/>
</dbReference>
<dbReference type="Pfam" id="PF20582">
    <property type="entry name" value="UPF0758_N"/>
    <property type="match status" value="1"/>
</dbReference>
<dbReference type="SUPFAM" id="SSF102712">
    <property type="entry name" value="JAB1/MPN domain"/>
    <property type="match status" value="1"/>
</dbReference>
<dbReference type="SUPFAM" id="SSF47781">
    <property type="entry name" value="RuvA domain 2-like"/>
    <property type="match status" value="1"/>
</dbReference>
<dbReference type="PROSITE" id="PS50249">
    <property type="entry name" value="MPN"/>
    <property type="match status" value="1"/>
</dbReference>
<dbReference type="PROSITE" id="PS01302">
    <property type="entry name" value="UPF0758"/>
    <property type="match status" value="1"/>
</dbReference>
<organism>
    <name type="scientific">Acidithiobacillus ferrooxidans (strain ATCC 53993 / BNL-5-31)</name>
    <name type="common">Leptospirillum ferrooxidans (ATCC 53993)</name>
    <dbReference type="NCBI Taxonomy" id="380394"/>
    <lineage>
        <taxon>Bacteria</taxon>
        <taxon>Pseudomonadati</taxon>
        <taxon>Pseudomonadota</taxon>
        <taxon>Acidithiobacillia</taxon>
        <taxon>Acidithiobacillales</taxon>
        <taxon>Acidithiobacillaceae</taxon>
        <taxon>Acidithiobacillus</taxon>
    </lineage>
</organism>
<protein>
    <recommendedName>
        <fullName>UPF0758 protein Lferr_0528</fullName>
    </recommendedName>
</protein>
<keyword id="KW-0378">Hydrolase</keyword>
<keyword id="KW-0479">Metal-binding</keyword>
<keyword id="KW-0482">Metalloprotease</keyword>
<keyword id="KW-0645">Protease</keyword>
<keyword id="KW-0862">Zinc</keyword>
<evidence type="ECO:0000255" key="1">
    <source>
        <dbReference type="PROSITE-ProRule" id="PRU01182"/>
    </source>
</evidence>
<evidence type="ECO:0000305" key="2"/>
<name>Y528_ACIF5</name>
<comment type="similarity">
    <text evidence="2">Belongs to the UPF0758 family.</text>
</comment>
<reference key="1">
    <citation type="submission" date="2008-08" db="EMBL/GenBank/DDBJ databases">
        <title>Complete sequence of Acidithiobacillus ferrooxidans ATCC 53993.</title>
        <authorList>
            <person name="Lucas S."/>
            <person name="Copeland A."/>
            <person name="Lapidus A."/>
            <person name="Glavina del Rio T."/>
            <person name="Dalin E."/>
            <person name="Tice H."/>
            <person name="Bruce D."/>
            <person name="Goodwin L."/>
            <person name="Pitluck S."/>
            <person name="Sims D."/>
            <person name="Brettin T."/>
            <person name="Detter J.C."/>
            <person name="Han C."/>
            <person name="Kuske C.R."/>
            <person name="Larimer F."/>
            <person name="Land M."/>
            <person name="Hauser L."/>
            <person name="Kyrpides N."/>
            <person name="Lykidis A."/>
            <person name="Borole A.P."/>
        </authorList>
    </citation>
    <scope>NUCLEOTIDE SEQUENCE [LARGE SCALE GENOMIC DNA]</scope>
    <source>
        <strain>ATCC 53993 / BNL-5-31</strain>
    </source>
</reference>
<gene>
    <name type="ordered locus">Lferr_0528</name>
</gene>
<proteinExistence type="inferred from homology"/>
<sequence length="224" mass="25071">MAITDWPVDERPRERLLQKGAATLSDAELLAIFLRVGVVGKSAVDLAREMLLNFGSLRALLTASHHDFCVHKGLGDAKYALLQAVLEMGRRHLAEEWQRGDGLDSPLRVRQYLSATLRDRCREVFAVIFLDNRHRVLRFEEMFLGTIDGATVHIREVLKRALELNAAALIVAHNHPSGVAEPSAADLSLTRRLDQAMQLLDLRLLDHFIVGDGEPLSLREQGGW</sequence>
<feature type="chain" id="PRO_1000089784" description="UPF0758 protein Lferr_0528">
    <location>
        <begin position="1"/>
        <end position="224"/>
    </location>
</feature>
<feature type="domain" description="MPN" evidence="1">
    <location>
        <begin position="102"/>
        <end position="224"/>
    </location>
</feature>
<feature type="short sequence motif" description="JAMM motif" evidence="1">
    <location>
        <begin position="173"/>
        <end position="186"/>
    </location>
</feature>
<feature type="binding site" evidence="1">
    <location>
        <position position="173"/>
    </location>
    <ligand>
        <name>Zn(2+)</name>
        <dbReference type="ChEBI" id="CHEBI:29105"/>
        <note>catalytic</note>
    </ligand>
</feature>
<feature type="binding site" evidence="1">
    <location>
        <position position="175"/>
    </location>
    <ligand>
        <name>Zn(2+)</name>
        <dbReference type="ChEBI" id="CHEBI:29105"/>
        <note>catalytic</note>
    </ligand>
</feature>
<feature type="binding site" evidence="1">
    <location>
        <position position="186"/>
    </location>
    <ligand>
        <name>Zn(2+)</name>
        <dbReference type="ChEBI" id="CHEBI:29105"/>
        <note>catalytic</note>
    </ligand>
</feature>
<accession>B5EMA3</accession>